<comment type="function">
    <text evidence="1">Endonuclease that resolves Holliday junction intermediates in genetic recombination. Cleaves mobile four-strand junctions by introducing symmetrical nicks in paired strands. Promotes annealing of linear ssDNA with homologous dsDNA. Required for DNA repair, homologous recombination and chromosome segregation (By similarity).</text>
</comment>
<comment type="catalytic activity">
    <reaction evidence="2">
        <text>Endonucleolytic cleavage at a junction such as a reciprocal single-stranded crossover between two homologous DNA duplexes (Holliday junction).</text>
        <dbReference type="EC" id="3.1.21.10"/>
    </reaction>
</comment>
<comment type="cofactor">
    <cofactor evidence="1">
        <name>Mg(2+)</name>
        <dbReference type="ChEBI" id="CHEBI:18420"/>
    </cofactor>
    <text evidence="1">Binds 1 Mg(2+) ion per subunit.</text>
</comment>
<comment type="subcellular location">
    <subcellularLocation>
        <location evidence="1">Cytoplasm</location>
    </subcellularLocation>
</comment>
<comment type="similarity">
    <text evidence="4">Belongs to the RecU family.</text>
</comment>
<dbReference type="EC" id="3.1.21.10" evidence="2"/>
<dbReference type="EMBL" id="M90528">
    <property type="protein sequence ID" value="AAA26957.1"/>
    <property type="molecule type" value="Genomic_DNA"/>
</dbReference>
<dbReference type="RefSeq" id="WP_000248760.1">
    <property type="nucleotide sequence ID" value="NZ_KQ969337.1"/>
</dbReference>
<dbReference type="SMR" id="Q00579"/>
<dbReference type="STRING" id="1303.SORDD17_00135"/>
<dbReference type="GO" id="GO:0005737">
    <property type="term" value="C:cytoplasm"/>
    <property type="evidence" value="ECO:0007669"/>
    <property type="project" value="UniProtKB-SubCell"/>
</dbReference>
<dbReference type="GO" id="GO:0004519">
    <property type="term" value="F:endonuclease activity"/>
    <property type="evidence" value="ECO:0007669"/>
    <property type="project" value="UniProtKB-UniRule"/>
</dbReference>
<dbReference type="GO" id="GO:0000287">
    <property type="term" value="F:magnesium ion binding"/>
    <property type="evidence" value="ECO:0007669"/>
    <property type="project" value="UniProtKB-UniRule"/>
</dbReference>
<dbReference type="GO" id="GO:0003676">
    <property type="term" value="F:nucleic acid binding"/>
    <property type="evidence" value="ECO:0007669"/>
    <property type="project" value="InterPro"/>
</dbReference>
<dbReference type="GO" id="GO:0007059">
    <property type="term" value="P:chromosome segregation"/>
    <property type="evidence" value="ECO:0007669"/>
    <property type="project" value="UniProtKB-UniRule"/>
</dbReference>
<dbReference type="GO" id="GO:0006310">
    <property type="term" value="P:DNA recombination"/>
    <property type="evidence" value="ECO:0007669"/>
    <property type="project" value="UniProtKB-UniRule"/>
</dbReference>
<dbReference type="GO" id="GO:0006281">
    <property type="term" value="P:DNA repair"/>
    <property type="evidence" value="ECO:0007669"/>
    <property type="project" value="UniProtKB-UniRule"/>
</dbReference>
<dbReference type="CDD" id="cd22354">
    <property type="entry name" value="RecU-like"/>
    <property type="match status" value="1"/>
</dbReference>
<dbReference type="Gene3D" id="3.40.1350.10">
    <property type="match status" value="1"/>
</dbReference>
<dbReference type="HAMAP" id="MF_00130">
    <property type="entry name" value="RecU"/>
    <property type="match status" value="1"/>
</dbReference>
<dbReference type="InterPro" id="IPR004612">
    <property type="entry name" value="Resolv_RecU"/>
</dbReference>
<dbReference type="InterPro" id="IPR011335">
    <property type="entry name" value="Restrct_endonuc-II-like"/>
</dbReference>
<dbReference type="InterPro" id="IPR011856">
    <property type="entry name" value="tRNA_endonuc-like_dom_sf"/>
</dbReference>
<dbReference type="NCBIfam" id="NF002580">
    <property type="entry name" value="PRK02234.1-1"/>
    <property type="match status" value="1"/>
</dbReference>
<dbReference type="NCBIfam" id="NF002584">
    <property type="entry name" value="PRK02234.1-5"/>
    <property type="match status" value="1"/>
</dbReference>
<dbReference type="NCBIfam" id="TIGR00648">
    <property type="entry name" value="recU"/>
    <property type="match status" value="1"/>
</dbReference>
<dbReference type="Pfam" id="PF03838">
    <property type="entry name" value="RecU"/>
    <property type="match status" value="1"/>
</dbReference>
<dbReference type="PIRSF" id="PIRSF037785">
    <property type="entry name" value="RecU"/>
    <property type="match status" value="1"/>
</dbReference>
<dbReference type="SUPFAM" id="SSF52980">
    <property type="entry name" value="Restriction endonuclease-like"/>
    <property type="match status" value="1"/>
</dbReference>
<gene>
    <name type="primary">recU</name>
</gene>
<name>RECU_STROR</name>
<sequence>MVNYPHKISSQKRQAPPSQTKNFANRGMSFEKMINATNDYYLSHGLAVIHKKPTPIQIVRVDYPQRSRAKIVEAYFRQASTTDYSGVYDGYYIDFEAKETRQKHAIPMKNFHHHQIQHMEQVLAQRGICFVLLHFASQQETYLLPAVDLIRFYHQDKGQKSMPLGYIRENGYRIELGAFPQIPYLDIIKEHLLGGKTR</sequence>
<reference key="1">
    <citation type="journal article" date="1992" name="J. Bacteriol.">
        <title>Nucleotide sequences of genes encoding penicillin-binding proteins from Streptococcus pneumoniae and Streptococcus oralis with high homology to Escherichia coli penicillin-binding proteins 1a and 1b.</title>
        <authorList>
            <person name="Martin C."/>
            <person name="Briese T."/>
            <person name="Hakenbeck R."/>
        </authorList>
    </citation>
    <scope>NUCLEOTIDE SEQUENCE [GENOMIC DNA]</scope>
</reference>
<evidence type="ECO:0000250" key="1"/>
<evidence type="ECO:0000255" key="2">
    <source>
        <dbReference type="HAMAP-Rule" id="MF_00130"/>
    </source>
</evidence>
<evidence type="ECO:0000256" key="3">
    <source>
        <dbReference type="SAM" id="MobiDB-lite"/>
    </source>
</evidence>
<evidence type="ECO:0000305" key="4"/>
<feature type="chain" id="PRO_0000212311" description="Holliday junction resolvase RecU">
    <location>
        <begin position="1"/>
        <end position="198"/>
    </location>
</feature>
<feature type="region of interest" description="Disordered" evidence="3">
    <location>
        <begin position="1"/>
        <end position="23"/>
    </location>
</feature>
<feature type="compositionally biased region" description="Polar residues" evidence="3">
    <location>
        <begin position="11"/>
        <end position="23"/>
    </location>
</feature>
<feature type="binding site" evidence="1">
    <location>
        <position position="81"/>
    </location>
    <ligand>
        <name>Mg(2+)</name>
        <dbReference type="ChEBI" id="CHEBI:18420"/>
    </ligand>
</feature>
<feature type="binding site" evidence="1">
    <location>
        <position position="83"/>
    </location>
    <ligand>
        <name>Mg(2+)</name>
        <dbReference type="ChEBI" id="CHEBI:18420"/>
    </ligand>
</feature>
<feature type="binding site" evidence="1">
    <location>
        <position position="96"/>
    </location>
    <ligand>
        <name>Mg(2+)</name>
        <dbReference type="ChEBI" id="CHEBI:18420"/>
    </ligand>
</feature>
<feature type="binding site" evidence="1">
    <location>
        <position position="115"/>
    </location>
    <ligand>
        <name>Mg(2+)</name>
        <dbReference type="ChEBI" id="CHEBI:18420"/>
    </ligand>
</feature>
<feature type="site" description="Transition state stabilizer" evidence="1">
    <location>
        <position position="98"/>
    </location>
</feature>
<proteinExistence type="inferred from homology"/>
<organism>
    <name type="scientific">Streptococcus oralis</name>
    <dbReference type="NCBI Taxonomy" id="1303"/>
    <lineage>
        <taxon>Bacteria</taxon>
        <taxon>Bacillati</taxon>
        <taxon>Bacillota</taxon>
        <taxon>Bacilli</taxon>
        <taxon>Lactobacillales</taxon>
        <taxon>Streptococcaceae</taxon>
        <taxon>Streptococcus</taxon>
    </lineage>
</organism>
<keyword id="KW-0963">Cytoplasm</keyword>
<keyword id="KW-0227">DNA damage</keyword>
<keyword id="KW-0233">DNA recombination</keyword>
<keyword id="KW-0234">DNA repair</keyword>
<keyword id="KW-0255">Endonuclease</keyword>
<keyword id="KW-0378">Hydrolase</keyword>
<keyword id="KW-0460">Magnesium</keyword>
<keyword id="KW-0479">Metal-binding</keyword>
<keyword id="KW-0540">Nuclease</keyword>
<protein>
    <recommendedName>
        <fullName>Holliday junction resolvase RecU</fullName>
        <ecNumber evidence="2">3.1.21.10</ecNumber>
    </recommendedName>
    <alternativeName>
        <fullName>Recombination protein U homolog</fullName>
    </alternativeName>
</protein>
<accession>Q00579</accession>